<evidence type="ECO:0000250" key="1">
    <source>
        <dbReference type="UniProtKB" id="P36114"/>
    </source>
</evidence>
<evidence type="ECO:0000250" key="2">
    <source>
        <dbReference type="UniProtKB" id="P47031"/>
    </source>
</evidence>
<evidence type="ECO:0000256" key="3">
    <source>
        <dbReference type="SAM" id="MobiDB-lite"/>
    </source>
</evidence>
<evidence type="ECO:0000305" key="4"/>
<name>IML2_YEAS7</name>
<reference key="1">
    <citation type="journal article" date="2007" name="Proc. Natl. Acad. Sci. U.S.A.">
        <title>Genome sequencing and comparative analysis of Saccharomyces cerevisiae strain YJM789.</title>
        <authorList>
            <person name="Wei W."/>
            <person name="McCusker J.H."/>
            <person name="Hyman R.W."/>
            <person name="Jones T."/>
            <person name="Ning Y."/>
            <person name="Cao Z."/>
            <person name="Gu Z."/>
            <person name="Bruno D."/>
            <person name="Miranda M."/>
            <person name="Nguyen M."/>
            <person name="Wilhelmy J."/>
            <person name="Komp C."/>
            <person name="Tamse R."/>
            <person name="Wang X."/>
            <person name="Jia P."/>
            <person name="Luedi P."/>
            <person name="Oefner P.J."/>
            <person name="David L."/>
            <person name="Dietrich F.S."/>
            <person name="Li Y."/>
            <person name="Davis R.W."/>
            <person name="Steinmetz L.M."/>
        </authorList>
    </citation>
    <scope>NUCLEOTIDE SEQUENCE [LARGE SCALE GENOMIC DNA]</scope>
    <source>
        <strain>YJM789</strain>
    </source>
</reference>
<sequence length="731" mass="82548">MFRVFGSFGSKGNQSSGEEQSTKTKQVLKQANDFEIALKAMDFVLDDRTDEGLNLLKKAEMETGSDQTILTLARGVIEFLQATLSFETEEMKRAAITLGKAEQMSWKSKQNAEKTNFRSSSIYPPGTVYAVTYTESCLLHALLMLFSESMMEAAKALLKLRRAYTMLQDIMVTVKKAERSKNSSSPSPSEKSQESCGSFVSAETTFISVDIPYKLSSEDKSNPLLLEFAEKIYTMRMGRLSGAHIGNTPSFHRLRDDLGLQTTPSQASDRHSVSDDFDLEQATIDEFIHSGANLCYGILQVVLSLLPPAIGAVLSIVGFKGSREEGLRLVWKAIKERNVHGCIGLLGLMFYYDGPFQFTDADFDIPPNDNGSRALNKSRTNDSSLLPGYMDSATLLHPGKILEDALLKARALFPNSALWLLNEAKMLAGKGRLRDSLALMDSIDVNSIRMRQVKSLMVFERAILLVNLHEYNRAADDLISLLDISDWSHALYTYFAGCCYLENWRMTQLGLLNDGKEQFYKERARELIFDAPSLLGKKTFKSKNLPLDRFMLRKVQQFNNMQKKLNLQEPLDSIATSPVHELAYFYNGYNRMTENDLILTKKMLTEYHNPAIDSEDPDQELIRNLLLSLTLRRLGDAERGLALLDDIVLPKIFYIQNGKVKYFKKTEDPWAYPAALYERALFCWKLGGMESLNECREWLLRAQNYAADYELSTRIGMKIKAALDRVENALA</sequence>
<accession>A6ZPP2</accession>
<dbReference type="EMBL" id="AAFW02000038">
    <property type="protein sequence ID" value="EDN63495.1"/>
    <property type="molecule type" value="Genomic_DNA"/>
</dbReference>
<dbReference type="HOGENOM" id="CLU_014926_0_0_1"/>
<dbReference type="Proteomes" id="UP000007060">
    <property type="component" value="Unassembled WGS sequence"/>
</dbReference>
<dbReference type="GO" id="GO:0005829">
    <property type="term" value="C:cytosol"/>
    <property type="evidence" value="ECO:0007669"/>
    <property type="project" value="TreeGrafter"/>
</dbReference>
<dbReference type="GO" id="GO:0005741">
    <property type="term" value="C:mitochondrial outer membrane"/>
    <property type="evidence" value="ECO:0007669"/>
    <property type="project" value="TreeGrafter"/>
</dbReference>
<dbReference type="GO" id="GO:0005634">
    <property type="term" value="C:nucleus"/>
    <property type="evidence" value="ECO:0007669"/>
    <property type="project" value="UniProtKB-SubCell"/>
</dbReference>
<dbReference type="InterPro" id="IPR019412">
    <property type="entry name" value="Iml2/TPR_39"/>
</dbReference>
<dbReference type="PANTHER" id="PTHR31859">
    <property type="entry name" value="TETRATRICOPEPTIDE REPEAT PROTEIN 39 FAMILY MEMBER"/>
    <property type="match status" value="1"/>
</dbReference>
<dbReference type="PANTHER" id="PTHR31859:SF1">
    <property type="entry name" value="TETRATRICOPEPTIDE REPEAT PROTEIN 39C"/>
    <property type="match status" value="1"/>
</dbReference>
<dbReference type="Pfam" id="PF10300">
    <property type="entry name" value="Iml2-TPR_39"/>
    <property type="match status" value="1"/>
</dbReference>
<keyword id="KW-0963">Cytoplasm</keyword>
<keyword id="KW-0539">Nucleus</keyword>
<keyword id="KW-0597">Phosphoprotein</keyword>
<proteinExistence type="inferred from homology"/>
<feature type="chain" id="PRO_0000333356" description="Inclusion body clearance protein IML2">
    <location>
        <begin position="1"/>
        <end position="731"/>
    </location>
</feature>
<feature type="region of interest" description="Disordered" evidence="3">
    <location>
        <begin position="1"/>
        <end position="26"/>
    </location>
</feature>
<feature type="compositionally biased region" description="Polar residues" evidence="3">
    <location>
        <begin position="10"/>
        <end position="26"/>
    </location>
</feature>
<feature type="modified residue" description="Phosphoserine" evidence="2">
    <location>
        <position position="265"/>
    </location>
</feature>
<feature type="modified residue" description="Phosphoserine" evidence="2">
    <location>
        <position position="268"/>
    </location>
</feature>
<feature type="modified residue" description="Phosphoserine" evidence="1">
    <location>
        <position position="378"/>
    </location>
</feature>
<feature type="modified residue" description="Phosphothreonine" evidence="2">
    <location>
        <position position="380"/>
    </location>
</feature>
<feature type="modified residue" description="Phosphoserine" evidence="2">
    <location>
        <position position="383"/>
    </location>
</feature>
<feature type="modified residue" description="Phosphoserine" evidence="2">
    <location>
        <position position="392"/>
    </location>
</feature>
<protein>
    <recommendedName>
        <fullName>Inclusion body clearance protein IML2</fullName>
    </recommendedName>
    <alternativeName>
        <fullName>Increased minichromosome loss protein 2</fullName>
    </alternativeName>
</protein>
<organism>
    <name type="scientific">Saccharomyces cerevisiae (strain YJM789)</name>
    <name type="common">Baker's yeast</name>
    <dbReference type="NCBI Taxonomy" id="307796"/>
    <lineage>
        <taxon>Eukaryota</taxon>
        <taxon>Fungi</taxon>
        <taxon>Dikarya</taxon>
        <taxon>Ascomycota</taxon>
        <taxon>Saccharomycotina</taxon>
        <taxon>Saccharomycetes</taxon>
        <taxon>Saccharomycetales</taxon>
        <taxon>Saccharomycetaceae</taxon>
        <taxon>Saccharomyces</taxon>
    </lineage>
</organism>
<comment type="function">
    <text evidence="2">Inclusion body (IB) resident protein that interacts strongly with lipid droplet (LD) proteins. Involved in LD-mediated IB clearing after protein folding stress, probably by enabling access to the IBs of an LD-stored soluble sterol derivative that acts as a chaperone in inclusion clearing.</text>
</comment>
<comment type="subunit">
    <text evidence="2">Interacts with lipid droplet proteins PET10 and PDR16.</text>
</comment>
<comment type="subcellular location">
    <subcellularLocation>
        <location evidence="2">Cytoplasm</location>
    </subcellularLocation>
    <subcellularLocation>
        <location evidence="2">Nucleus</location>
    </subcellularLocation>
    <text evidence="2">Localized exclusively in cytoplasmic inclusion bodies under protein folding stress conditions.</text>
</comment>
<comment type="similarity">
    <text evidence="4">Belongs to the IML2 family.</text>
</comment>
<gene>
    <name type="primary">IML2</name>
    <name type="ORF">SCY_2852</name>
</gene>